<gene>
    <name evidence="1" type="primary">tusA</name>
    <name type="ordered locus">PputW619_1633</name>
</gene>
<reference key="1">
    <citation type="submission" date="2008-02" db="EMBL/GenBank/DDBJ databases">
        <title>Complete sequence of Pseudomonas putida W619.</title>
        <authorList>
            <person name="Copeland A."/>
            <person name="Lucas S."/>
            <person name="Lapidus A."/>
            <person name="Barry K."/>
            <person name="Detter J.C."/>
            <person name="Glavina del Rio T."/>
            <person name="Dalin E."/>
            <person name="Tice H."/>
            <person name="Pitluck S."/>
            <person name="Chain P."/>
            <person name="Malfatti S."/>
            <person name="Shin M."/>
            <person name="Vergez L."/>
            <person name="Schmutz J."/>
            <person name="Larimer F."/>
            <person name="Land M."/>
            <person name="Hauser L."/>
            <person name="Kyrpides N."/>
            <person name="Kim E."/>
            <person name="Taghavi S."/>
            <person name="Vangronsveld D."/>
            <person name="van der Lelie D."/>
            <person name="Richardson P."/>
        </authorList>
    </citation>
    <scope>NUCLEOTIDE SEQUENCE [LARGE SCALE GENOMIC DNA]</scope>
    <source>
        <strain>W619</strain>
    </source>
</reference>
<keyword id="KW-0963">Cytoplasm</keyword>
<name>TUSA_PSEPW</name>
<protein>
    <recommendedName>
        <fullName evidence="1">Sulfur carrier protein TusA</fullName>
    </recommendedName>
</protein>
<feature type="chain" id="PRO_1000199927" description="Sulfur carrier protein TusA">
    <location>
        <begin position="1"/>
        <end position="80"/>
    </location>
</feature>
<feature type="active site" description="Cysteine persulfide intermediate" evidence="1">
    <location>
        <position position="17"/>
    </location>
</feature>
<organism>
    <name type="scientific">Pseudomonas putida (strain W619)</name>
    <dbReference type="NCBI Taxonomy" id="390235"/>
    <lineage>
        <taxon>Bacteria</taxon>
        <taxon>Pseudomonadati</taxon>
        <taxon>Pseudomonadota</taxon>
        <taxon>Gammaproteobacteria</taxon>
        <taxon>Pseudomonadales</taxon>
        <taxon>Pseudomonadaceae</taxon>
        <taxon>Pseudomonas</taxon>
    </lineage>
</organism>
<comment type="function">
    <text evidence="1">Sulfur carrier protein which probably makes part of a sulfur-relay system.</text>
</comment>
<comment type="subcellular location">
    <subcellularLocation>
        <location evidence="1">Cytoplasm</location>
    </subcellularLocation>
</comment>
<comment type="similarity">
    <text evidence="1">Belongs to the sulfur carrier protein TusA family.</text>
</comment>
<accession>B1J5D6</accession>
<proteinExistence type="inferred from homology"/>
<dbReference type="EMBL" id="CP000949">
    <property type="protein sequence ID" value="ACA72138.1"/>
    <property type="molecule type" value="Genomic_DNA"/>
</dbReference>
<dbReference type="SMR" id="B1J5D6"/>
<dbReference type="STRING" id="390235.PputW619_1633"/>
<dbReference type="KEGG" id="ppw:PputW619_1633"/>
<dbReference type="eggNOG" id="COG0425">
    <property type="taxonomic scope" value="Bacteria"/>
</dbReference>
<dbReference type="HOGENOM" id="CLU_165255_5_1_6"/>
<dbReference type="OrthoDB" id="9797352at2"/>
<dbReference type="GO" id="GO:0005737">
    <property type="term" value="C:cytoplasm"/>
    <property type="evidence" value="ECO:0007669"/>
    <property type="project" value="UniProtKB-SubCell"/>
</dbReference>
<dbReference type="GO" id="GO:0097163">
    <property type="term" value="F:sulfur carrier activity"/>
    <property type="evidence" value="ECO:0007669"/>
    <property type="project" value="UniProtKB-UniRule"/>
</dbReference>
<dbReference type="GO" id="GO:0002143">
    <property type="term" value="P:tRNA wobble position uridine thiolation"/>
    <property type="evidence" value="ECO:0007669"/>
    <property type="project" value="InterPro"/>
</dbReference>
<dbReference type="CDD" id="cd03423">
    <property type="entry name" value="SirA"/>
    <property type="match status" value="1"/>
</dbReference>
<dbReference type="Gene3D" id="3.30.110.40">
    <property type="entry name" value="TusA-like domain"/>
    <property type="match status" value="1"/>
</dbReference>
<dbReference type="HAMAP" id="MF_00413">
    <property type="entry name" value="Thiourid_synth_A"/>
    <property type="match status" value="1"/>
</dbReference>
<dbReference type="InterPro" id="IPR022931">
    <property type="entry name" value="Sulphur_carrier_TusA"/>
</dbReference>
<dbReference type="InterPro" id="IPR001455">
    <property type="entry name" value="TusA-like"/>
</dbReference>
<dbReference type="InterPro" id="IPR036868">
    <property type="entry name" value="TusA-like_sf"/>
</dbReference>
<dbReference type="NCBIfam" id="NF001423">
    <property type="entry name" value="PRK00299.1"/>
    <property type="match status" value="1"/>
</dbReference>
<dbReference type="PANTHER" id="PTHR33279:SF2">
    <property type="entry name" value="SULFUR CARRIER PROTEIN TUSA"/>
    <property type="match status" value="1"/>
</dbReference>
<dbReference type="PANTHER" id="PTHR33279">
    <property type="entry name" value="SULFUR CARRIER PROTEIN YEDF-RELATED"/>
    <property type="match status" value="1"/>
</dbReference>
<dbReference type="Pfam" id="PF01206">
    <property type="entry name" value="TusA"/>
    <property type="match status" value="1"/>
</dbReference>
<dbReference type="SUPFAM" id="SSF64307">
    <property type="entry name" value="SirA-like"/>
    <property type="match status" value="1"/>
</dbReference>
<dbReference type="PROSITE" id="PS01148">
    <property type="entry name" value="UPF0033"/>
    <property type="match status" value="1"/>
</dbReference>
<evidence type="ECO:0000255" key="1">
    <source>
        <dbReference type="HAMAP-Rule" id="MF_00413"/>
    </source>
</evidence>
<sequence>MTDFTPDAILDATGLNCPEPVMMLHTHVRNLAAGGLLKVIATDPSTRRDIPKFCNFLGHELLQQQEEAGTYLYWIRKKAD</sequence>